<comment type="function">
    <text evidence="1">Catalyzes the irreversible transfer of a propylamine group from the amino donor S-adenosylmethioninamine (decarboxy-AdoMet) to putrescine (1,4-diaminobutane) to yield spermidine.</text>
</comment>
<comment type="catalytic activity">
    <reaction evidence="1">
        <text>S-adenosyl 3-(methylsulfanyl)propylamine + putrescine = S-methyl-5'-thioadenosine + spermidine + H(+)</text>
        <dbReference type="Rhea" id="RHEA:12721"/>
        <dbReference type="ChEBI" id="CHEBI:15378"/>
        <dbReference type="ChEBI" id="CHEBI:17509"/>
        <dbReference type="ChEBI" id="CHEBI:57443"/>
        <dbReference type="ChEBI" id="CHEBI:57834"/>
        <dbReference type="ChEBI" id="CHEBI:326268"/>
        <dbReference type="EC" id="2.5.1.16"/>
    </reaction>
</comment>
<comment type="pathway">
    <text evidence="1">Amine and polyamine biosynthesis; spermidine biosynthesis; spermidine from putrescine: step 1/1.</text>
</comment>
<comment type="subunit">
    <text evidence="1">Homodimer or homotetramer.</text>
</comment>
<comment type="subcellular location">
    <subcellularLocation>
        <location evidence="1">Cytoplasm</location>
    </subcellularLocation>
</comment>
<comment type="similarity">
    <text evidence="1">Belongs to the spermidine/spermine synthase family.</text>
</comment>
<organism>
    <name type="scientific">Clostridium perfringens (strain SM101 / Type A)</name>
    <dbReference type="NCBI Taxonomy" id="289380"/>
    <lineage>
        <taxon>Bacteria</taxon>
        <taxon>Bacillati</taxon>
        <taxon>Bacillota</taxon>
        <taxon>Clostridia</taxon>
        <taxon>Eubacteriales</taxon>
        <taxon>Clostridiaceae</taxon>
        <taxon>Clostridium</taxon>
    </lineage>
</organism>
<sequence>MELWYTEEHTDKVRFSIKVDEQLYSGKSDFQRIDVFKSQEFGTFFTLDGLMMVTEKDEFIYHDMIVHVPMATNPNIKNVLVIGAGDGGTVRELTRYETIEKIDMVEIDKLVVDVCREYLPQTANKLDDPRVSLFFEDGLKFVRSVENKYDLIIVDSTDPFGPGEGLFTREFYGNCFKALKEDGILVNQHESPYYEEYARGMKRAHKRIKECFPVCRVYQAHIPTYPSGHWLFGFASKKYDPLNANIEKWNDLGLKTKYYNTDLHKGCFALPNYVKEMLENVDE</sequence>
<gene>
    <name evidence="1" type="primary">speE</name>
    <name type="ordered locus">CPR_0515</name>
</gene>
<protein>
    <recommendedName>
        <fullName evidence="1">Polyamine aminopropyltransferase</fullName>
    </recommendedName>
    <alternativeName>
        <fullName evidence="1">Putrescine aminopropyltransferase</fullName>
        <shortName evidence="1">PAPT</shortName>
    </alternativeName>
    <alternativeName>
        <fullName evidence="1">Spermidine synthase</fullName>
        <shortName evidence="1">SPDS</shortName>
        <shortName evidence="1">SPDSY</shortName>
        <ecNumber evidence="1">2.5.1.16</ecNumber>
    </alternativeName>
</protein>
<proteinExistence type="inferred from homology"/>
<dbReference type="EC" id="2.5.1.16" evidence="1"/>
<dbReference type="EMBL" id="CP000312">
    <property type="protein sequence ID" value="ABG86992.1"/>
    <property type="molecule type" value="Genomic_DNA"/>
</dbReference>
<dbReference type="RefSeq" id="WP_011591614.1">
    <property type="nucleotide sequence ID" value="NC_008262.1"/>
</dbReference>
<dbReference type="SMR" id="Q0SVK7"/>
<dbReference type="KEGG" id="cpr:CPR_0515"/>
<dbReference type="UniPathway" id="UPA00248">
    <property type="reaction ID" value="UER00314"/>
</dbReference>
<dbReference type="Proteomes" id="UP000001824">
    <property type="component" value="Chromosome"/>
</dbReference>
<dbReference type="GO" id="GO:0005829">
    <property type="term" value="C:cytosol"/>
    <property type="evidence" value="ECO:0007669"/>
    <property type="project" value="TreeGrafter"/>
</dbReference>
<dbReference type="GO" id="GO:0004766">
    <property type="term" value="F:spermidine synthase activity"/>
    <property type="evidence" value="ECO:0007669"/>
    <property type="project" value="UniProtKB-UniRule"/>
</dbReference>
<dbReference type="GO" id="GO:0008295">
    <property type="term" value="P:spermidine biosynthetic process"/>
    <property type="evidence" value="ECO:0007669"/>
    <property type="project" value="UniProtKB-UniRule"/>
</dbReference>
<dbReference type="CDD" id="cd02440">
    <property type="entry name" value="AdoMet_MTases"/>
    <property type="match status" value="1"/>
</dbReference>
<dbReference type="Gene3D" id="2.30.140.10">
    <property type="entry name" value="Spermidine synthase, tetramerisation domain"/>
    <property type="match status" value="1"/>
</dbReference>
<dbReference type="Gene3D" id="3.40.50.150">
    <property type="entry name" value="Vaccinia Virus protein VP39"/>
    <property type="match status" value="1"/>
</dbReference>
<dbReference type="HAMAP" id="MF_00198">
    <property type="entry name" value="Spermidine_synth"/>
    <property type="match status" value="1"/>
</dbReference>
<dbReference type="InterPro" id="IPR030374">
    <property type="entry name" value="PABS"/>
</dbReference>
<dbReference type="InterPro" id="IPR029063">
    <property type="entry name" value="SAM-dependent_MTases_sf"/>
</dbReference>
<dbReference type="InterPro" id="IPR001045">
    <property type="entry name" value="Spermi_synthase"/>
</dbReference>
<dbReference type="InterPro" id="IPR035246">
    <property type="entry name" value="Spermidine_synt_N"/>
</dbReference>
<dbReference type="InterPro" id="IPR037163">
    <property type="entry name" value="Spermidine_synt_N_sf"/>
</dbReference>
<dbReference type="NCBIfam" id="NF002010">
    <property type="entry name" value="PRK00811.1"/>
    <property type="match status" value="1"/>
</dbReference>
<dbReference type="NCBIfam" id="TIGR00417">
    <property type="entry name" value="speE"/>
    <property type="match status" value="1"/>
</dbReference>
<dbReference type="PANTHER" id="PTHR11558:SF11">
    <property type="entry name" value="SPERMIDINE SYNTHASE"/>
    <property type="match status" value="1"/>
</dbReference>
<dbReference type="PANTHER" id="PTHR11558">
    <property type="entry name" value="SPERMIDINE/SPERMINE SYNTHASE"/>
    <property type="match status" value="1"/>
</dbReference>
<dbReference type="Pfam" id="PF17284">
    <property type="entry name" value="Spermine_synt_N"/>
    <property type="match status" value="1"/>
</dbReference>
<dbReference type="Pfam" id="PF01564">
    <property type="entry name" value="Spermine_synth"/>
    <property type="match status" value="1"/>
</dbReference>
<dbReference type="SUPFAM" id="SSF53335">
    <property type="entry name" value="S-adenosyl-L-methionine-dependent methyltransferases"/>
    <property type="match status" value="1"/>
</dbReference>
<dbReference type="PROSITE" id="PS51006">
    <property type="entry name" value="PABS_2"/>
    <property type="match status" value="1"/>
</dbReference>
<feature type="chain" id="PRO_1000011996" description="Polyamine aminopropyltransferase">
    <location>
        <begin position="1"/>
        <end position="283"/>
    </location>
</feature>
<feature type="domain" description="PABS" evidence="1">
    <location>
        <begin position="2"/>
        <end position="237"/>
    </location>
</feature>
<feature type="active site" description="Proton acceptor" evidence="1">
    <location>
        <position position="155"/>
    </location>
</feature>
<feature type="binding site" evidence="1">
    <location>
        <position position="31"/>
    </location>
    <ligand>
        <name>S-methyl-5'-thioadenosine</name>
        <dbReference type="ChEBI" id="CHEBI:17509"/>
    </ligand>
</feature>
<feature type="binding site" evidence="1">
    <location>
        <position position="62"/>
    </location>
    <ligand>
        <name>spermidine</name>
        <dbReference type="ChEBI" id="CHEBI:57834"/>
    </ligand>
</feature>
<feature type="binding site" evidence="1">
    <location>
        <position position="86"/>
    </location>
    <ligand>
        <name>spermidine</name>
        <dbReference type="ChEBI" id="CHEBI:57834"/>
    </ligand>
</feature>
<feature type="binding site" evidence="1">
    <location>
        <position position="106"/>
    </location>
    <ligand>
        <name>S-methyl-5'-thioadenosine</name>
        <dbReference type="ChEBI" id="CHEBI:17509"/>
    </ligand>
</feature>
<feature type="binding site" evidence="1">
    <location>
        <begin position="137"/>
        <end position="138"/>
    </location>
    <ligand>
        <name>S-methyl-5'-thioadenosine</name>
        <dbReference type="ChEBI" id="CHEBI:17509"/>
    </ligand>
</feature>
<feature type="binding site" evidence="1">
    <location>
        <begin position="155"/>
        <end position="158"/>
    </location>
    <ligand>
        <name>spermidine</name>
        <dbReference type="ChEBI" id="CHEBI:57834"/>
    </ligand>
</feature>
<feature type="binding site" evidence="1">
    <location>
        <position position="162"/>
    </location>
    <ligand>
        <name>S-methyl-5'-thioadenosine</name>
        <dbReference type="ChEBI" id="CHEBI:17509"/>
    </ligand>
</feature>
<accession>Q0SVK7</accession>
<name>SPEE_CLOPS</name>
<evidence type="ECO:0000255" key="1">
    <source>
        <dbReference type="HAMAP-Rule" id="MF_00198"/>
    </source>
</evidence>
<reference key="1">
    <citation type="journal article" date="2006" name="Genome Res.">
        <title>Skewed genomic variability in strains of the toxigenic bacterial pathogen, Clostridium perfringens.</title>
        <authorList>
            <person name="Myers G.S.A."/>
            <person name="Rasko D.A."/>
            <person name="Cheung J.K."/>
            <person name="Ravel J."/>
            <person name="Seshadri R."/>
            <person name="DeBoy R.T."/>
            <person name="Ren Q."/>
            <person name="Varga J."/>
            <person name="Awad M.M."/>
            <person name="Brinkac L.M."/>
            <person name="Daugherty S.C."/>
            <person name="Haft D.H."/>
            <person name="Dodson R.J."/>
            <person name="Madupu R."/>
            <person name="Nelson W.C."/>
            <person name="Rosovitz M.J."/>
            <person name="Sullivan S.A."/>
            <person name="Khouri H."/>
            <person name="Dimitrov G.I."/>
            <person name="Watkins K.L."/>
            <person name="Mulligan S."/>
            <person name="Benton J."/>
            <person name="Radune D."/>
            <person name="Fisher D.J."/>
            <person name="Atkins H.S."/>
            <person name="Hiscox T."/>
            <person name="Jost B.H."/>
            <person name="Billington S.J."/>
            <person name="Songer J.G."/>
            <person name="McClane B.A."/>
            <person name="Titball R.W."/>
            <person name="Rood J.I."/>
            <person name="Melville S.B."/>
            <person name="Paulsen I.T."/>
        </authorList>
    </citation>
    <scope>NUCLEOTIDE SEQUENCE [LARGE SCALE GENOMIC DNA]</scope>
    <source>
        <strain>SM101 / Type A</strain>
    </source>
</reference>
<keyword id="KW-0963">Cytoplasm</keyword>
<keyword id="KW-0620">Polyamine biosynthesis</keyword>
<keyword id="KW-0745">Spermidine biosynthesis</keyword>
<keyword id="KW-0808">Transferase</keyword>